<keyword id="KW-0028">Amino-acid biosynthesis</keyword>
<keyword id="KW-0963">Cytoplasm</keyword>
<keyword id="KW-0413">Isomerase</keyword>
<keyword id="KW-0457">Lysine biosynthesis</keyword>
<sequence>MGVESVRCPLHFTKMQGAGNDFVVLDLRDGTPPPDVALVAWLADRHFGIGCDQVIAIEPPRGVGVFAAYRIWNADGSAAQQCGNGARCVAAWLVRDGSVADEHFLIDSPVQAHLVRCIGKDEYAVEMGLPVFEPERIPLSGFPNACGEYVLSLQGEVLRCGAVSMGNPHAVVEVDLIDVAPVERIGSLLQQHVAFPESVNVGFVQVIDPGLVRLRVYERGAGETLACGSGACAAAVVLMQRGRVGRDVRVVLPGGTLRVQWPVSGGPVTLSGPAKCVFDGVWYG</sequence>
<accession>Q9PD98</accession>
<organism>
    <name type="scientific">Xylella fastidiosa (strain 9a5c)</name>
    <dbReference type="NCBI Taxonomy" id="160492"/>
    <lineage>
        <taxon>Bacteria</taxon>
        <taxon>Pseudomonadati</taxon>
        <taxon>Pseudomonadota</taxon>
        <taxon>Gammaproteobacteria</taxon>
        <taxon>Lysobacterales</taxon>
        <taxon>Lysobacteraceae</taxon>
        <taxon>Xylella</taxon>
    </lineage>
</organism>
<protein>
    <recommendedName>
        <fullName evidence="1">Diaminopimelate epimerase</fullName>
        <shortName evidence="1">DAP epimerase</shortName>
        <ecNumber evidence="1">5.1.1.7</ecNumber>
    </recommendedName>
    <alternativeName>
        <fullName evidence="1">PLP-independent amino acid racemase</fullName>
    </alternativeName>
</protein>
<reference key="1">
    <citation type="journal article" date="2000" name="Nature">
        <title>The genome sequence of the plant pathogen Xylella fastidiosa.</title>
        <authorList>
            <person name="Simpson A.J.G."/>
            <person name="Reinach F.C."/>
            <person name="Arruda P."/>
            <person name="Abreu F.A."/>
            <person name="Acencio M."/>
            <person name="Alvarenga R."/>
            <person name="Alves L.M.C."/>
            <person name="Araya J.E."/>
            <person name="Baia G.S."/>
            <person name="Baptista C.S."/>
            <person name="Barros M.H."/>
            <person name="Bonaccorsi E.D."/>
            <person name="Bordin S."/>
            <person name="Bove J.M."/>
            <person name="Briones M.R.S."/>
            <person name="Bueno M.R.P."/>
            <person name="Camargo A.A."/>
            <person name="Camargo L.E.A."/>
            <person name="Carraro D.M."/>
            <person name="Carrer H."/>
            <person name="Colauto N.B."/>
            <person name="Colombo C."/>
            <person name="Costa F.F."/>
            <person name="Costa M.C.R."/>
            <person name="Costa-Neto C.M."/>
            <person name="Coutinho L.L."/>
            <person name="Cristofani M."/>
            <person name="Dias-Neto E."/>
            <person name="Docena C."/>
            <person name="El-Dorry H."/>
            <person name="Facincani A.P."/>
            <person name="Ferreira A.J.S."/>
            <person name="Ferreira V.C.A."/>
            <person name="Ferro J.A."/>
            <person name="Fraga J.S."/>
            <person name="Franca S.C."/>
            <person name="Franco M.C."/>
            <person name="Frohme M."/>
            <person name="Furlan L.R."/>
            <person name="Garnier M."/>
            <person name="Goldman G.H."/>
            <person name="Goldman M.H.S."/>
            <person name="Gomes S.L."/>
            <person name="Gruber A."/>
            <person name="Ho P.L."/>
            <person name="Hoheisel J.D."/>
            <person name="Junqueira M.L."/>
            <person name="Kemper E.L."/>
            <person name="Kitajima J.P."/>
            <person name="Krieger J.E."/>
            <person name="Kuramae E.E."/>
            <person name="Laigret F."/>
            <person name="Lambais M.R."/>
            <person name="Leite L.C.C."/>
            <person name="Lemos E.G.M."/>
            <person name="Lemos M.V.F."/>
            <person name="Lopes S.A."/>
            <person name="Lopes C.R."/>
            <person name="Machado J.A."/>
            <person name="Machado M.A."/>
            <person name="Madeira A.M.B.N."/>
            <person name="Madeira H.M.F."/>
            <person name="Marino C.L."/>
            <person name="Marques M.V."/>
            <person name="Martins E.A.L."/>
            <person name="Martins E.M.F."/>
            <person name="Matsukuma A.Y."/>
            <person name="Menck C.F.M."/>
            <person name="Miracca E.C."/>
            <person name="Miyaki C.Y."/>
            <person name="Monteiro-Vitorello C.B."/>
            <person name="Moon D.H."/>
            <person name="Nagai M.A."/>
            <person name="Nascimento A.L.T.O."/>
            <person name="Netto L.E.S."/>
            <person name="Nhani A. Jr."/>
            <person name="Nobrega F.G."/>
            <person name="Nunes L.R."/>
            <person name="Oliveira M.A."/>
            <person name="de Oliveira M.C."/>
            <person name="de Oliveira R.C."/>
            <person name="Palmieri D.A."/>
            <person name="Paris A."/>
            <person name="Peixoto B.R."/>
            <person name="Pereira G.A.G."/>
            <person name="Pereira H.A. Jr."/>
            <person name="Pesquero J.B."/>
            <person name="Quaggio R.B."/>
            <person name="Roberto P.G."/>
            <person name="Rodrigues V."/>
            <person name="de Rosa A.J.M."/>
            <person name="de Rosa V.E. Jr."/>
            <person name="de Sa R.G."/>
            <person name="Santelli R.V."/>
            <person name="Sawasaki H.E."/>
            <person name="da Silva A.C.R."/>
            <person name="da Silva A.M."/>
            <person name="da Silva F.R."/>
            <person name="Silva W.A. Jr."/>
            <person name="da Silveira J.F."/>
            <person name="Silvestri M.L.Z."/>
            <person name="Siqueira W.J."/>
            <person name="de Souza A.A."/>
            <person name="de Souza A.P."/>
            <person name="Terenzi M.F."/>
            <person name="Truffi D."/>
            <person name="Tsai S.M."/>
            <person name="Tsuhako M.H."/>
            <person name="Vallada H."/>
            <person name="Van Sluys M.A."/>
            <person name="Verjovski-Almeida S."/>
            <person name="Vettore A.L."/>
            <person name="Zago M.A."/>
            <person name="Zatz M."/>
            <person name="Meidanis J."/>
            <person name="Setubal J.C."/>
        </authorList>
    </citation>
    <scope>NUCLEOTIDE SEQUENCE [LARGE SCALE GENOMIC DNA]</scope>
    <source>
        <strain>9a5c</strain>
    </source>
</reference>
<dbReference type="EC" id="5.1.1.7" evidence="1"/>
<dbReference type="EMBL" id="AE003849">
    <property type="protein sequence ID" value="AAF84290.1"/>
    <property type="molecule type" value="Genomic_DNA"/>
</dbReference>
<dbReference type="PIR" id="D82677">
    <property type="entry name" value="D82677"/>
</dbReference>
<dbReference type="RefSeq" id="WP_010893982.1">
    <property type="nucleotide sequence ID" value="NC_002488.3"/>
</dbReference>
<dbReference type="SMR" id="Q9PD98"/>
<dbReference type="STRING" id="160492.XF_1481"/>
<dbReference type="KEGG" id="xfa:XF_1481"/>
<dbReference type="eggNOG" id="COG0253">
    <property type="taxonomic scope" value="Bacteria"/>
</dbReference>
<dbReference type="HOGENOM" id="CLU_053306_1_1_6"/>
<dbReference type="UniPathway" id="UPA00034">
    <property type="reaction ID" value="UER00025"/>
</dbReference>
<dbReference type="Proteomes" id="UP000000812">
    <property type="component" value="Chromosome"/>
</dbReference>
<dbReference type="GO" id="GO:0005829">
    <property type="term" value="C:cytosol"/>
    <property type="evidence" value="ECO:0007669"/>
    <property type="project" value="TreeGrafter"/>
</dbReference>
<dbReference type="GO" id="GO:0008837">
    <property type="term" value="F:diaminopimelate epimerase activity"/>
    <property type="evidence" value="ECO:0007669"/>
    <property type="project" value="UniProtKB-UniRule"/>
</dbReference>
<dbReference type="GO" id="GO:0009089">
    <property type="term" value="P:lysine biosynthetic process via diaminopimelate"/>
    <property type="evidence" value="ECO:0007669"/>
    <property type="project" value="UniProtKB-UniRule"/>
</dbReference>
<dbReference type="Gene3D" id="3.10.310.10">
    <property type="entry name" value="Diaminopimelate Epimerase, Chain A, domain 1"/>
    <property type="match status" value="2"/>
</dbReference>
<dbReference type="HAMAP" id="MF_00197">
    <property type="entry name" value="DAP_epimerase"/>
    <property type="match status" value="1"/>
</dbReference>
<dbReference type="InterPro" id="IPR018510">
    <property type="entry name" value="DAP_epimerase_AS"/>
</dbReference>
<dbReference type="InterPro" id="IPR001653">
    <property type="entry name" value="DAP_epimerase_DapF"/>
</dbReference>
<dbReference type="NCBIfam" id="TIGR00652">
    <property type="entry name" value="DapF"/>
    <property type="match status" value="1"/>
</dbReference>
<dbReference type="PANTHER" id="PTHR31689:SF0">
    <property type="entry name" value="DIAMINOPIMELATE EPIMERASE"/>
    <property type="match status" value="1"/>
</dbReference>
<dbReference type="PANTHER" id="PTHR31689">
    <property type="entry name" value="DIAMINOPIMELATE EPIMERASE, CHLOROPLASTIC"/>
    <property type="match status" value="1"/>
</dbReference>
<dbReference type="Pfam" id="PF01678">
    <property type="entry name" value="DAP_epimerase"/>
    <property type="match status" value="2"/>
</dbReference>
<dbReference type="SUPFAM" id="SSF54506">
    <property type="entry name" value="Diaminopimelate epimerase-like"/>
    <property type="match status" value="2"/>
</dbReference>
<dbReference type="PROSITE" id="PS01326">
    <property type="entry name" value="DAP_EPIMERASE"/>
    <property type="match status" value="1"/>
</dbReference>
<name>DAPF_XYLFA</name>
<proteinExistence type="inferred from homology"/>
<feature type="chain" id="PRO_0000149882" description="Diaminopimelate epimerase">
    <location>
        <begin position="1"/>
        <end position="284"/>
    </location>
</feature>
<feature type="active site" description="Proton donor" evidence="1">
    <location>
        <position position="82"/>
    </location>
</feature>
<feature type="active site" description="Proton acceptor" evidence="1">
    <location>
        <position position="227"/>
    </location>
</feature>
<feature type="binding site" evidence="1">
    <location>
        <position position="20"/>
    </location>
    <ligand>
        <name>substrate</name>
    </ligand>
</feature>
<feature type="binding site" evidence="1">
    <location>
        <position position="53"/>
    </location>
    <ligand>
        <name>substrate</name>
    </ligand>
</feature>
<feature type="binding site" evidence="1">
    <location>
        <position position="73"/>
    </location>
    <ligand>
        <name>substrate</name>
    </ligand>
</feature>
<feature type="binding site" evidence="1">
    <location>
        <begin position="83"/>
        <end position="84"/>
    </location>
    <ligand>
        <name>substrate</name>
    </ligand>
</feature>
<feature type="binding site" evidence="1">
    <location>
        <position position="167"/>
    </location>
    <ligand>
        <name>substrate</name>
    </ligand>
</feature>
<feature type="binding site" evidence="1">
    <location>
        <position position="200"/>
    </location>
    <ligand>
        <name>substrate</name>
    </ligand>
</feature>
<feature type="binding site" evidence="1">
    <location>
        <begin position="218"/>
        <end position="219"/>
    </location>
    <ligand>
        <name>substrate</name>
    </ligand>
</feature>
<feature type="binding site" evidence="1">
    <location>
        <begin position="228"/>
        <end position="229"/>
    </location>
    <ligand>
        <name>substrate</name>
    </ligand>
</feature>
<feature type="site" description="Could be important to modulate the pK values of the two catalytic cysteine residues" evidence="1">
    <location>
        <position position="169"/>
    </location>
</feature>
<feature type="site" description="Could be important to modulate the pK values of the two catalytic cysteine residues" evidence="1">
    <location>
        <position position="218"/>
    </location>
</feature>
<feature type="site" description="Important for dimerization" evidence="1">
    <location>
        <position position="278"/>
    </location>
</feature>
<comment type="function">
    <text evidence="1">Catalyzes the stereoinversion of LL-2,6-diaminopimelate (L,L-DAP) to meso-diaminopimelate (meso-DAP), a precursor of L-lysine and an essential component of the bacterial peptidoglycan.</text>
</comment>
<comment type="catalytic activity">
    <reaction evidence="1">
        <text>(2S,6S)-2,6-diaminopimelate = meso-2,6-diaminopimelate</text>
        <dbReference type="Rhea" id="RHEA:15393"/>
        <dbReference type="ChEBI" id="CHEBI:57609"/>
        <dbReference type="ChEBI" id="CHEBI:57791"/>
        <dbReference type="EC" id="5.1.1.7"/>
    </reaction>
</comment>
<comment type="pathway">
    <text evidence="1">Amino-acid biosynthesis; L-lysine biosynthesis via DAP pathway; DL-2,6-diaminopimelate from LL-2,6-diaminopimelate: step 1/1.</text>
</comment>
<comment type="subunit">
    <text evidence="1">Homodimer.</text>
</comment>
<comment type="subcellular location">
    <subcellularLocation>
        <location evidence="1">Cytoplasm</location>
    </subcellularLocation>
</comment>
<comment type="similarity">
    <text evidence="1">Belongs to the diaminopimelate epimerase family.</text>
</comment>
<evidence type="ECO:0000255" key="1">
    <source>
        <dbReference type="HAMAP-Rule" id="MF_00197"/>
    </source>
</evidence>
<gene>
    <name evidence="1" type="primary">dapF</name>
    <name type="ordered locus">XF_1481</name>
</gene>